<comment type="similarity">
    <text evidence="1">Belongs to the ninH family.</text>
</comment>
<name>NINH_BPVT2</name>
<gene>
    <name type="primary">ninH</name>
</gene>
<feature type="chain" id="PRO_0000077636" description="Protein ninH">
    <location>
        <begin position="1"/>
        <end position="64"/>
    </location>
</feature>
<organism>
    <name type="scientific">Enterobacteria phage VT2-Sa</name>
    <name type="common">Bacteriophage VT2-Sa</name>
    <dbReference type="NCBI Taxonomy" id="97081"/>
    <lineage>
        <taxon>Viruses</taxon>
        <taxon>Duplodnaviria</taxon>
        <taxon>Heunggongvirae</taxon>
        <taxon>Uroviricota</taxon>
        <taxon>Caudoviricetes</taxon>
        <taxon>Sepvirinae</taxon>
        <taxon>Traversvirus</taxon>
        <taxon>Traversvirus II</taxon>
    </lineage>
</organism>
<organismHost>
    <name type="scientific">Escherichia coli O157:H7</name>
    <dbReference type="NCBI Taxonomy" id="83334"/>
</organismHost>
<proteinExistence type="inferred from homology"/>
<accession>P69177</accession>
<accession>Q9ZWX0</accession>
<protein>
    <recommendedName>
        <fullName>Protein ninH</fullName>
    </recommendedName>
</protein>
<sequence length="64" mass="7266">MTFTVKTIPDMLVEAYENQTEVARILNCSRNTVRKYTGDKEGKRHAIVNGVLMVHRGWGKDTDA</sequence>
<reference key="1">
    <citation type="journal article" date="1999" name="DNA Res.">
        <title>Sequence analysis of Stx2-converting phage VT2-Sa shows a great divergence in early regulation and replication regions.</title>
        <authorList>
            <person name="Miyamoto H."/>
            <person name="Nakai W."/>
            <person name="Yajima N."/>
            <person name="Fujibayashi A."/>
            <person name="Higuchi T."/>
            <person name="Sato K."/>
            <person name="Matsushiro A."/>
        </authorList>
    </citation>
    <scope>NUCLEOTIDE SEQUENCE [LARGE SCALE GENOMIC DNA]</scope>
</reference>
<keyword id="KW-1185">Reference proteome</keyword>
<dbReference type="EMBL" id="AP000363">
    <property type="protein sequence ID" value="BAA84321.1"/>
    <property type="molecule type" value="Genomic_DNA"/>
</dbReference>
<dbReference type="RefSeq" id="NP_050537.1">
    <property type="nucleotide sequence ID" value="NC_000902.1"/>
</dbReference>
<dbReference type="SMR" id="P69177"/>
<dbReference type="KEGG" id="vg:1262240"/>
<dbReference type="OrthoDB" id="21777at10239"/>
<dbReference type="Proteomes" id="UP000002665">
    <property type="component" value="Genome"/>
</dbReference>
<dbReference type="InterPro" id="IPR010454">
    <property type="entry name" value="Phage_NinH"/>
</dbReference>
<dbReference type="Pfam" id="PF06322">
    <property type="entry name" value="Phage_NinH"/>
    <property type="match status" value="1"/>
</dbReference>
<evidence type="ECO:0000305" key="1"/>